<dbReference type="EC" id="2.1.1.173" evidence="1"/>
<dbReference type="EC" id="2.1.1.264" evidence="1"/>
<dbReference type="EMBL" id="CR954246">
    <property type="protein sequence ID" value="CAI86740.1"/>
    <property type="molecule type" value="Genomic_DNA"/>
</dbReference>
<dbReference type="SMR" id="Q3IGZ3"/>
<dbReference type="STRING" id="326442.PSHAa1667"/>
<dbReference type="KEGG" id="pha:PSHAa1667"/>
<dbReference type="PATRIC" id="fig|326442.8.peg.1612"/>
<dbReference type="eggNOG" id="COG0116">
    <property type="taxonomic scope" value="Bacteria"/>
</dbReference>
<dbReference type="eggNOG" id="COG1092">
    <property type="taxonomic scope" value="Bacteria"/>
</dbReference>
<dbReference type="HOGENOM" id="CLU_014042_2_0_6"/>
<dbReference type="BioCyc" id="PHAL326442:PSHA_RS08170-MONOMER"/>
<dbReference type="Proteomes" id="UP000006843">
    <property type="component" value="Chromosome I"/>
</dbReference>
<dbReference type="GO" id="GO:0005737">
    <property type="term" value="C:cytoplasm"/>
    <property type="evidence" value="ECO:0007669"/>
    <property type="project" value="UniProtKB-SubCell"/>
</dbReference>
<dbReference type="GO" id="GO:0052915">
    <property type="term" value="F:23S rRNA (guanine(2445)-N(2))-methyltransferase activity"/>
    <property type="evidence" value="ECO:0007669"/>
    <property type="project" value="UniProtKB-UniRule"/>
</dbReference>
<dbReference type="GO" id="GO:0003723">
    <property type="term" value="F:RNA binding"/>
    <property type="evidence" value="ECO:0007669"/>
    <property type="project" value="UniProtKB-KW"/>
</dbReference>
<dbReference type="GO" id="GO:0070043">
    <property type="term" value="F:rRNA (guanine-N7-)-methyltransferase activity"/>
    <property type="evidence" value="ECO:0007669"/>
    <property type="project" value="UniProtKB-UniRule"/>
</dbReference>
<dbReference type="CDD" id="cd02440">
    <property type="entry name" value="AdoMet_MTases"/>
    <property type="match status" value="1"/>
</dbReference>
<dbReference type="CDD" id="cd11715">
    <property type="entry name" value="THUMP_AdoMetMT"/>
    <property type="match status" value="1"/>
</dbReference>
<dbReference type="FunFam" id="3.40.50.150:FF:000039">
    <property type="entry name" value="Ribosomal RNA large subunit methyltransferase K/L"/>
    <property type="match status" value="1"/>
</dbReference>
<dbReference type="Gene3D" id="3.30.2130.30">
    <property type="match status" value="1"/>
</dbReference>
<dbReference type="Gene3D" id="3.30.750.80">
    <property type="entry name" value="RNA methyltransferase domain (HRMD) like"/>
    <property type="match status" value="1"/>
</dbReference>
<dbReference type="Gene3D" id="3.40.50.150">
    <property type="entry name" value="Vaccinia Virus protein VP39"/>
    <property type="match status" value="2"/>
</dbReference>
<dbReference type="HAMAP" id="MF_01858">
    <property type="entry name" value="23SrRNA_methyltr_KL"/>
    <property type="match status" value="1"/>
</dbReference>
<dbReference type="InterPro" id="IPR017244">
    <property type="entry name" value="23SrRNA_methyltr_KL"/>
</dbReference>
<dbReference type="InterPro" id="IPR000241">
    <property type="entry name" value="RlmKL-like_Mtase"/>
</dbReference>
<dbReference type="InterPro" id="IPR054170">
    <property type="entry name" value="RlmL_1st"/>
</dbReference>
<dbReference type="InterPro" id="IPR019614">
    <property type="entry name" value="SAM-dep_methyl-trfase"/>
</dbReference>
<dbReference type="InterPro" id="IPR029063">
    <property type="entry name" value="SAM-dependent_MTases_sf"/>
</dbReference>
<dbReference type="InterPro" id="IPR004114">
    <property type="entry name" value="THUMP_dom"/>
</dbReference>
<dbReference type="NCBIfam" id="NF008748">
    <property type="entry name" value="PRK11783.1"/>
    <property type="match status" value="1"/>
</dbReference>
<dbReference type="PANTHER" id="PTHR47313">
    <property type="entry name" value="RIBOSOMAL RNA LARGE SUBUNIT METHYLTRANSFERASE K/L"/>
    <property type="match status" value="1"/>
</dbReference>
<dbReference type="PANTHER" id="PTHR47313:SF1">
    <property type="entry name" value="RIBOSOMAL RNA LARGE SUBUNIT METHYLTRANSFERASE K_L"/>
    <property type="match status" value="1"/>
</dbReference>
<dbReference type="Pfam" id="PF10672">
    <property type="entry name" value="Methyltrans_SAM"/>
    <property type="match status" value="1"/>
</dbReference>
<dbReference type="Pfam" id="PF22020">
    <property type="entry name" value="RlmL_1st"/>
    <property type="match status" value="1"/>
</dbReference>
<dbReference type="Pfam" id="PF02926">
    <property type="entry name" value="THUMP"/>
    <property type="match status" value="1"/>
</dbReference>
<dbReference type="Pfam" id="PF01170">
    <property type="entry name" value="UPF0020"/>
    <property type="match status" value="1"/>
</dbReference>
<dbReference type="PIRSF" id="PIRSF037618">
    <property type="entry name" value="RNA_Mtase_bacteria_prd"/>
    <property type="match status" value="1"/>
</dbReference>
<dbReference type="SMART" id="SM00981">
    <property type="entry name" value="THUMP"/>
    <property type="match status" value="1"/>
</dbReference>
<dbReference type="SUPFAM" id="SSF53335">
    <property type="entry name" value="S-adenosyl-L-methionine-dependent methyltransferases"/>
    <property type="match status" value="2"/>
</dbReference>
<dbReference type="PROSITE" id="PS51165">
    <property type="entry name" value="THUMP"/>
    <property type="match status" value="1"/>
</dbReference>
<sequence>MQFIALTSIGIENLLVDELTELGATVSKQTVGSVRFEADSLLAQKVCLSTRFATRVLMLIEEKEGVDDKNSLYNFARSQPWQEWFGPTQTFAVDFNGTNDSLKNTQFSGLVIKDAIVDYFNDLFEQRPNVDKQDANVRVVARLNRYGVSMYIDYSGPRLSERGYRQGQGKAPIKEHLAAALIKRSGWLENVNQPLFDPCCGAGTILIEAAGMARNEAPGLFREGFAFERLPSFRAAKFKELKEELLGNIIDPKLWLIGHDYDAQVLGKAIDNAKRAELDDIIKFKQSDATKLTAVAKLPGVVISNLPYGERIGSMAELVDLHRNLGVGFKKHFNHWKLALLGMDESLFKLLKLVRLKRYKFKNGPLDVELNLYQLDDKQVSLTTDDKKALNFEGSMSFANRLKKNKQGLKNWLKQNEITAYRVYEADIPEYNVAVDIYGDSAVIFEYAAPKEIDEKTSEKRLQDVISLTAEQLKIAPENIAVKVRKKQKGEEQYTPMAKQNRTMVVEEFGAKFKVNLFDYLDTGLFLDHRLMRRYIQENAKDKRFLNLFAYTGTASVHAALGGAKAITTVDLSKTYLKWGQDNFDLNNISNTRYRFEQADCLKWLEHATAQYDLIFLDPPTFSNSKRMKDAFDVQSDHIKLLTWVKKILSPSGTLIFSNNKRGFVMDEVGLIGLGLKAVNISDKTLSPDFKRNKKIHNSWLITHG</sequence>
<comment type="function">
    <text evidence="1">Specifically methylates the guanine in position 2445 (m2G2445) and the guanine in position 2069 (m7G2069) of 23S rRNA.</text>
</comment>
<comment type="catalytic activity">
    <reaction evidence="1">
        <text>guanosine(2445) in 23S rRNA + S-adenosyl-L-methionine = N(2)-methylguanosine(2445) in 23S rRNA + S-adenosyl-L-homocysteine + H(+)</text>
        <dbReference type="Rhea" id="RHEA:42740"/>
        <dbReference type="Rhea" id="RHEA-COMP:10215"/>
        <dbReference type="Rhea" id="RHEA-COMP:10216"/>
        <dbReference type="ChEBI" id="CHEBI:15378"/>
        <dbReference type="ChEBI" id="CHEBI:57856"/>
        <dbReference type="ChEBI" id="CHEBI:59789"/>
        <dbReference type="ChEBI" id="CHEBI:74269"/>
        <dbReference type="ChEBI" id="CHEBI:74481"/>
        <dbReference type="EC" id="2.1.1.173"/>
    </reaction>
</comment>
<comment type="catalytic activity">
    <reaction evidence="1">
        <text>guanosine(2069) in 23S rRNA + S-adenosyl-L-methionine = N(2)-methylguanosine(2069) in 23S rRNA + S-adenosyl-L-homocysteine + H(+)</text>
        <dbReference type="Rhea" id="RHEA:43772"/>
        <dbReference type="Rhea" id="RHEA-COMP:10688"/>
        <dbReference type="Rhea" id="RHEA-COMP:10689"/>
        <dbReference type="ChEBI" id="CHEBI:15378"/>
        <dbReference type="ChEBI" id="CHEBI:57856"/>
        <dbReference type="ChEBI" id="CHEBI:59789"/>
        <dbReference type="ChEBI" id="CHEBI:74269"/>
        <dbReference type="ChEBI" id="CHEBI:74481"/>
        <dbReference type="EC" id="2.1.1.264"/>
    </reaction>
</comment>
<comment type="subcellular location">
    <subcellularLocation>
        <location evidence="1">Cytoplasm</location>
    </subcellularLocation>
</comment>
<comment type="similarity">
    <text evidence="1">Belongs to the methyltransferase superfamily. RlmKL family.</text>
</comment>
<feature type="chain" id="PRO_0000366784" description="Ribosomal RNA large subunit methyltransferase K/L">
    <location>
        <begin position="1"/>
        <end position="705"/>
    </location>
</feature>
<feature type="domain" description="THUMP" evidence="1">
    <location>
        <begin position="42"/>
        <end position="154"/>
    </location>
</feature>
<name>RLMKL_PSET1</name>
<accession>Q3IGZ3</accession>
<reference key="1">
    <citation type="journal article" date="2005" name="Genome Res.">
        <title>Coping with cold: the genome of the versatile marine Antarctica bacterium Pseudoalteromonas haloplanktis TAC125.</title>
        <authorList>
            <person name="Medigue C."/>
            <person name="Krin E."/>
            <person name="Pascal G."/>
            <person name="Barbe V."/>
            <person name="Bernsel A."/>
            <person name="Bertin P.N."/>
            <person name="Cheung F."/>
            <person name="Cruveiller S."/>
            <person name="D'Amico S."/>
            <person name="Duilio A."/>
            <person name="Fang G."/>
            <person name="Feller G."/>
            <person name="Ho C."/>
            <person name="Mangenot S."/>
            <person name="Marino G."/>
            <person name="Nilsson J."/>
            <person name="Parrilli E."/>
            <person name="Rocha E.P.C."/>
            <person name="Rouy Z."/>
            <person name="Sekowska A."/>
            <person name="Tutino M.L."/>
            <person name="Vallenet D."/>
            <person name="von Heijne G."/>
            <person name="Danchin A."/>
        </authorList>
    </citation>
    <scope>NUCLEOTIDE SEQUENCE [LARGE SCALE GENOMIC DNA]</scope>
    <source>
        <strain>TAC 125</strain>
    </source>
</reference>
<evidence type="ECO:0000255" key="1">
    <source>
        <dbReference type="HAMAP-Rule" id="MF_01858"/>
    </source>
</evidence>
<gene>
    <name evidence="1" type="primary">rlmL</name>
    <name type="ordered locus">PSHAa1667</name>
</gene>
<protein>
    <recommendedName>
        <fullName evidence="1">Ribosomal RNA large subunit methyltransferase K/L</fullName>
    </recommendedName>
    <domain>
        <recommendedName>
            <fullName evidence="1">23S rRNA m2G2445 methyltransferase</fullName>
            <ecNumber evidence="1">2.1.1.173</ecNumber>
        </recommendedName>
        <alternativeName>
            <fullName evidence="1">rRNA (guanine-N(2)-)-methyltransferase RlmL</fullName>
        </alternativeName>
    </domain>
    <domain>
        <recommendedName>
            <fullName evidence="1">23S rRNA m7G2069 methyltransferase</fullName>
            <ecNumber evidence="1">2.1.1.264</ecNumber>
        </recommendedName>
        <alternativeName>
            <fullName evidence="1">rRNA (guanine-N(7)-)-methyltransferase RlmK</fullName>
        </alternativeName>
    </domain>
</protein>
<organism>
    <name type="scientific">Pseudoalteromonas translucida (strain TAC 125)</name>
    <dbReference type="NCBI Taxonomy" id="326442"/>
    <lineage>
        <taxon>Bacteria</taxon>
        <taxon>Pseudomonadati</taxon>
        <taxon>Pseudomonadota</taxon>
        <taxon>Gammaproteobacteria</taxon>
        <taxon>Alteromonadales</taxon>
        <taxon>Pseudoalteromonadaceae</taxon>
        <taxon>Pseudoalteromonas</taxon>
    </lineage>
</organism>
<proteinExistence type="inferred from homology"/>
<keyword id="KW-0963">Cytoplasm</keyword>
<keyword id="KW-0489">Methyltransferase</keyword>
<keyword id="KW-1185">Reference proteome</keyword>
<keyword id="KW-0694">RNA-binding</keyword>
<keyword id="KW-0698">rRNA processing</keyword>
<keyword id="KW-0949">S-adenosyl-L-methionine</keyword>
<keyword id="KW-0808">Transferase</keyword>